<reference key="1">
    <citation type="journal article" date="2007" name="Nature">
        <title>Evolution of genes and genomes on the Drosophila phylogeny.</title>
        <authorList>
            <consortium name="Drosophila 12 genomes consortium"/>
        </authorList>
    </citation>
    <scope>NUCLEOTIDE SEQUENCE [LARGE SCALE GENOMIC DNA]</scope>
    <source>
        <strain>Tucson 14030-0811.24</strain>
    </source>
</reference>
<comment type="function">
    <text evidence="2">Plays an essential role in the assembly of succinate dehydrogenase (SDH), an enzyme complex (also referred to as respiratory complex II) that is a component of both the tricarboxylic acid (TCA) cycle and the mitochondrial electron transport chain, and which couples the oxidation of succinate to fumarate with the reduction of ubiquinone (coenzyme Q) to ubiquinol. Required for flavinylation (covalent attachment of FAD) of the flavoprotein subunit of the SDH catalytic dimer.</text>
</comment>
<comment type="subunit">
    <text evidence="2">Interacts with the flavoprotein subunit within the SDH catalytic dimer.</text>
</comment>
<comment type="subcellular location">
    <subcellularLocation>
        <location evidence="2">Mitochondrion matrix</location>
    </subcellularLocation>
</comment>
<comment type="similarity">
    <text evidence="2">Belongs to the SDHAF2 family.</text>
</comment>
<sequence>MLRQILSSAVAKSTRGLSFTVNRLASNLDKSEYTTPGEIIDYDDPTHLPVPEYPLRPDEPLETRKQRLLYQSRKRGMLENDLLLSTFVAKYLRDFNADQTAQYDKLINGVSNDWDIFYWATETKATPAEYDNEIMQMLKQHVKNEERVQRIRQPDL</sequence>
<organism>
    <name type="scientific">Drosophila willistoni</name>
    <name type="common">Fruit fly</name>
    <dbReference type="NCBI Taxonomy" id="7260"/>
    <lineage>
        <taxon>Eukaryota</taxon>
        <taxon>Metazoa</taxon>
        <taxon>Ecdysozoa</taxon>
        <taxon>Arthropoda</taxon>
        <taxon>Hexapoda</taxon>
        <taxon>Insecta</taxon>
        <taxon>Pterygota</taxon>
        <taxon>Neoptera</taxon>
        <taxon>Endopterygota</taxon>
        <taxon>Diptera</taxon>
        <taxon>Brachycera</taxon>
        <taxon>Muscomorpha</taxon>
        <taxon>Ephydroidea</taxon>
        <taxon>Drosophilidae</taxon>
        <taxon>Drosophila</taxon>
        <taxon>Sophophora</taxon>
    </lineage>
</organism>
<dbReference type="EMBL" id="CH964154">
    <property type="protein sequence ID" value="EDW79854.1"/>
    <property type="molecule type" value="Genomic_DNA"/>
</dbReference>
<dbReference type="SMR" id="B4N665"/>
<dbReference type="STRING" id="7260.B4N665"/>
<dbReference type="EnsemblMetazoa" id="FBtr0248659">
    <property type="protein sequence ID" value="FBpp0247151"/>
    <property type="gene ID" value="FBgn0220007"/>
</dbReference>
<dbReference type="EnsemblMetazoa" id="XM_002068832.4">
    <property type="protein sequence ID" value="XP_002068868.1"/>
    <property type="gene ID" value="LOC6646210"/>
</dbReference>
<dbReference type="GeneID" id="6646210"/>
<dbReference type="KEGG" id="dwi:6646210"/>
<dbReference type="eggNOG" id="KOG3326">
    <property type="taxonomic scope" value="Eukaryota"/>
</dbReference>
<dbReference type="HOGENOM" id="CLU_103054_0_3_1"/>
<dbReference type="OMA" id="DTEIMRM"/>
<dbReference type="OrthoDB" id="284292at2759"/>
<dbReference type="PhylomeDB" id="B4N665"/>
<dbReference type="Proteomes" id="UP000007798">
    <property type="component" value="Unassembled WGS sequence"/>
</dbReference>
<dbReference type="GO" id="GO:0005759">
    <property type="term" value="C:mitochondrial matrix"/>
    <property type="evidence" value="ECO:0007669"/>
    <property type="project" value="UniProtKB-SubCell"/>
</dbReference>
<dbReference type="GO" id="GO:0005739">
    <property type="term" value="C:mitochondrion"/>
    <property type="evidence" value="ECO:0000250"/>
    <property type="project" value="UniProtKB"/>
</dbReference>
<dbReference type="GO" id="GO:0006121">
    <property type="term" value="P:mitochondrial electron transport, succinate to ubiquinone"/>
    <property type="evidence" value="ECO:0000250"/>
    <property type="project" value="UniProtKB"/>
</dbReference>
<dbReference type="GO" id="GO:0034553">
    <property type="term" value="P:mitochondrial respiratory chain complex II assembly"/>
    <property type="evidence" value="ECO:0007669"/>
    <property type="project" value="TreeGrafter"/>
</dbReference>
<dbReference type="GO" id="GO:0018293">
    <property type="term" value="P:protein-FAD linkage"/>
    <property type="evidence" value="ECO:0000250"/>
    <property type="project" value="UniProtKB"/>
</dbReference>
<dbReference type="GO" id="GO:0006099">
    <property type="term" value="P:tricarboxylic acid cycle"/>
    <property type="evidence" value="ECO:0007669"/>
    <property type="project" value="TreeGrafter"/>
</dbReference>
<dbReference type="FunFam" id="1.10.150.250:FF:000002">
    <property type="entry name" value="Succinate dehydrogenase assembly factor 2, mitochondrial"/>
    <property type="match status" value="1"/>
</dbReference>
<dbReference type="Gene3D" id="1.10.150.250">
    <property type="entry name" value="Flavinator of succinate dehydrogenase"/>
    <property type="match status" value="1"/>
</dbReference>
<dbReference type="HAMAP" id="MF_03057">
    <property type="entry name" value="SDHAF2"/>
    <property type="match status" value="1"/>
</dbReference>
<dbReference type="InterPro" id="IPR005631">
    <property type="entry name" value="SDH"/>
</dbReference>
<dbReference type="InterPro" id="IPR036714">
    <property type="entry name" value="SDH_sf"/>
</dbReference>
<dbReference type="InterPro" id="IPR028882">
    <property type="entry name" value="SDHAF2"/>
</dbReference>
<dbReference type="PANTHER" id="PTHR12469">
    <property type="entry name" value="PROTEIN EMI5 HOMOLOG, MITOCHONDRIAL"/>
    <property type="match status" value="1"/>
</dbReference>
<dbReference type="PANTHER" id="PTHR12469:SF2">
    <property type="entry name" value="SUCCINATE DEHYDROGENASE ASSEMBLY FACTOR 2, MITOCHONDRIAL"/>
    <property type="match status" value="1"/>
</dbReference>
<dbReference type="Pfam" id="PF03937">
    <property type="entry name" value="Sdh5"/>
    <property type="match status" value="1"/>
</dbReference>
<dbReference type="SUPFAM" id="SSF109910">
    <property type="entry name" value="YgfY-like"/>
    <property type="match status" value="1"/>
</dbReference>
<feature type="transit peptide" description="Mitochondrion" evidence="1">
    <location>
        <begin position="1"/>
        <end position="12"/>
    </location>
</feature>
<feature type="chain" id="PRO_0000383181" description="Succinate dehydrogenase assembly factor 2-B, mitochondrial">
    <location>
        <begin position="13"/>
        <end position="156"/>
    </location>
</feature>
<gene>
    <name type="ORF">GK18008</name>
</gene>
<protein>
    <recommendedName>
        <fullName evidence="2">Succinate dehydrogenase assembly factor 2-B, mitochondrial</fullName>
        <shortName evidence="2">SDH assembly factor 2-B</shortName>
        <shortName evidence="2">SDHAF2-B</shortName>
    </recommendedName>
</protein>
<name>SDF2B_DROWI</name>
<proteinExistence type="inferred from homology"/>
<evidence type="ECO:0000255" key="1"/>
<evidence type="ECO:0000255" key="2">
    <source>
        <dbReference type="HAMAP-Rule" id="MF_03057"/>
    </source>
</evidence>
<accession>B4N665</accession>
<keyword id="KW-0143">Chaperone</keyword>
<keyword id="KW-0496">Mitochondrion</keyword>
<keyword id="KW-1185">Reference proteome</keyword>
<keyword id="KW-0809">Transit peptide</keyword>